<evidence type="ECO:0000255" key="1">
    <source>
        <dbReference type="HAMAP-Rule" id="MF_00311"/>
    </source>
</evidence>
<proteinExistence type="inferred from homology"/>
<reference key="1">
    <citation type="journal article" date="2008" name="Genome Res.">
        <title>Chlamydia trachomatis: genome sequence analysis of lymphogranuloma venereum isolates.</title>
        <authorList>
            <person name="Thomson N.R."/>
            <person name="Holden M.T.G."/>
            <person name="Carder C."/>
            <person name="Lennard N."/>
            <person name="Lockey S.J."/>
            <person name="Marsh P."/>
            <person name="Skipp P."/>
            <person name="O'Connor C.D."/>
            <person name="Goodhead I."/>
            <person name="Norbertzcak H."/>
            <person name="Harris B."/>
            <person name="Ormond D."/>
            <person name="Rance R."/>
            <person name="Quail M.A."/>
            <person name="Parkhill J."/>
            <person name="Stephens R.S."/>
            <person name="Clarke I.N."/>
        </authorList>
    </citation>
    <scope>NUCLEOTIDE SEQUENCE [LARGE SCALE GENOMIC DNA]</scope>
    <source>
        <strain>ATCC VR-902B / DSM 19102 / 434/Bu</strain>
    </source>
</reference>
<organism>
    <name type="scientific">Chlamydia trachomatis serovar L2 (strain ATCC VR-902B / DSM 19102 / 434/Bu)</name>
    <dbReference type="NCBI Taxonomy" id="471472"/>
    <lineage>
        <taxon>Bacteria</taxon>
        <taxon>Pseudomonadati</taxon>
        <taxon>Chlamydiota</taxon>
        <taxon>Chlamydiia</taxon>
        <taxon>Chlamydiales</taxon>
        <taxon>Chlamydiaceae</taxon>
        <taxon>Chlamydia/Chlamydophila group</taxon>
        <taxon>Chlamydia</taxon>
    </lineage>
</organism>
<keyword id="KW-0066">ATP synthesis</keyword>
<keyword id="KW-0375">Hydrogen ion transport</keyword>
<keyword id="KW-0406">Ion transport</keyword>
<keyword id="KW-0813">Transport</keyword>
<sequence length="208" mass="22946">MADLSAQDKLKQICDALREETLKPAEEEAGSIVHNAREQAKRIVEEAKEEAQRIIRSAEETADQTLKKGEAALVQAGKRSLENLKQAVETKIFRESLGEWLDHVATDPEVSAKLVQALVQAVDAQGISGNLSAYIGKHVSARAVNEALGKEITSKLKEKGVSVGKFSGGAQLKVEERNWVLDMSSEVLLDLLTRFLQKDFREMIFQSC</sequence>
<feature type="chain" id="PRO_1000115671" description="V-type proton ATPase subunit E">
    <location>
        <begin position="1"/>
        <end position="208"/>
    </location>
</feature>
<protein>
    <recommendedName>
        <fullName evidence="1">V-type proton ATPase subunit E</fullName>
    </recommendedName>
    <alternativeName>
        <fullName evidence="1">V-ATPase subunit E</fullName>
    </alternativeName>
</protein>
<name>VATE_CHLT2</name>
<dbReference type="EMBL" id="AM884176">
    <property type="protein sequence ID" value="CAP04002.1"/>
    <property type="molecule type" value="Genomic_DNA"/>
</dbReference>
<dbReference type="RefSeq" id="WP_009873715.1">
    <property type="nucleotide sequence ID" value="NC_010287.1"/>
</dbReference>
<dbReference type="RefSeq" id="YP_001654638.1">
    <property type="nucleotide sequence ID" value="NC_010287.1"/>
</dbReference>
<dbReference type="SMR" id="B0B7M6"/>
<dbReference type="KEGG" id="ctb:CTL0562"/>
<dbReference type="PATRIC" id="fig|471472.4.peg.603"/>
<dbReference type="HOGENOM" id="CLU_1314973_0_0_0"/>
<dbReference type="Proteomes" id="UP001154402">
    <property type="component" value="Chromosome"/>
</dbReference>
<dbReference type="GO" id="GO:0033178">
    <property type="term" value="C:proton-transporting two-sector ATPase complex, catalytic domain"/>
    <property type="evidence" value="ECO:0007669"/>
    <property type="project" value="InterPro"/>
</dbReference>
<dbReference type="GO" id="GO:0005524">
    <property type="term" value="F:ATP binding"/>
    <property type="evidence" value="ECO:0007669"/>
    <property type="project" value="UniProtKB-UniRule"/>
</dbReference>
<dbReference type="GO" id="GO:0046933">
    <property type="term" value="F:proton-transporting ATP synthase activity, rotational mechanism"/>
    <property type="evidence" value="ECO:0007669"/>
    <property type="project" value="UniProtKB-UniRule"/>
</dbReference>
<dbReference type="GO" id="GO:0046961">
    <property type="term" value="F:proton-transporting ATPase activity, rotational mechanism"/>
    <property type="evidence" value="ECO:0007669"/>
    <property type="project" value="InterPro"/>
</dbReference>
<dbReference type="GO" id="GO:0042777">
    <property type="term" value="P:proton motive force-driven plasma membrane ATP synthesis"/>
    <property type="evidence" value="ECO:0007669"/>
    <property type="project" value="UniProtKB-UniRule"/>
</dbReference>
<dbReference type="Gene3D" id="1.20.5.2950">
    <property type="match status" value="1"/>
</dbReference>
<dbReference type="HAMAP" id="MF_00311">
    <property type="entry name" value="ATP_synth_E_arch"/>
    <property type="match status" value="1"/>
</dbReference>
<dbReference type="InterPro" id="IPR028987">
    <property type="entry name" value="ATP_synth_B-like_membr_sf"/>
</dbReference>
<dbReference type="InterPro" id="IPR002842">
    <property type="entry name" value="ATPase_V1_Esu"/>
</dbReference>
<dbReference type="InterPro" id="IPR009335">
    <property type="entry name" value="T3SS_HrpE/ATPase_suE"/>
</dbReference>
<dbReference type="NCBIfam" id="NF002170">
    <property type="entry name" value="PRK01005.1"/>
    <property type="match status" value="1"/>
</dbReference>
<dbReference type="Pfam" id="PF06188">
    <property type="entry name" value="HrpE"/>
    <property type="match status" value="1"/>
</dbReference>
<dbReference type="SUPFAM" id="SSF81573">
    <property type="entry name" value="F1F0 ATP synthase subunit B, membrane domain"/>
    <property type="match status" value="1"/>
</dbReference>
<comment type="function">
    <text evidence="1">Produces ATP from ADP in the presence of a proton gradient across the membrane.</text>
</comment>
<comment type="similarity">
    <text evidence="1">Belongs to the V-ATPase E subunit family.</text>
</comment>
<gene>
    <name evidence="1" type="primary">atpE</name>
    <name type="ordered locus">CTL0562</name>
</gene>
<accession>B0B7M6</accession>